<comment type="subcellular location">
    <subcellularLocation>
        <location evidence="1">Cell inner membrane</location>
        <topology evidence="1">Multi-pass membrane protein</topology>
    </subcellularLocation>
</comment>
<comment type="similarity">
    <text evidence="1">Belongs to the universal stress protein B family.</text>
</comment>
<feature type="chain" id="PRO_1000136923" description="Universal stress protein B">
    <location>
        <begin position="1"/>
        <end position="111"/>
    </location>
</feature>
<feature type="transmembrane region" description="Helical" evidence="1">
    <location>
        <begin position="1"/>
        <end position="21"/>
    </location>
</feature>
<feature type="transmembrane region" description="Helical" evidence="1">
    <location>
        <begin position="90"/>
        <end position="110"/>
    </location>
</feature>
<sequence>MISTVALFWALCVVCIVNMARYFSSLRALLVVLRNCDPLLYQYVDGGGFFTSHGQPNKQVRLVWYIYAQRYRDHHDDEFIRRCERVRRQFILTSALCGLVVVSLIALMIWH</sequence>
<accession>B2U3Q2</accession>
<gene>
    <name evidence="1" type="primary">uspB</name>
    <name type="ordered locus">SbBS512_E3828</name>
</gene>
<reference key="1">
    <citation type="submission" date="2008-05" db="EMBL/GenBank/DDBJ databases">
        <title>Complete sequence of Shigella boydii serotype 18 strain BS512.</title>
        <authorList>
            <person name="Rasko D.A."/>
            <person name="Rosovitz M."/>
            <person name="Maurelli A.T."/>
            <person name="Myers G."/>
            <person name="Seshadri R."/>
            <person name="Cer R."/>
            <person name="Jiang L."/>
            <person name="Ravel J."/>
            <person name="Sebastian Y."/>
        </authorList>
    </citation>
    <scope>NUCLEOTIDE SEQUENCE [LARGE SCALE GENOMIC DNA]</scope>
    <source>
        <strain>CDC 3083-94 / BS512</strain>
    </source>
</reference>
<proteinExistence type="inferred from homology"/>
<evidence type="ECO:0000255" key="1">
    <source>
        <dbReference type="HAMAP-Rule" id="MF_01088"/>
    </source>
</evidence>
<keyword id="KW-0997">Cell inner membrane</keyword>
<keyword id="KW-1003">Cell membrane</keyword>
<keyword id="KW-0472">Membrane</keyword>
<keyword id="KW-1185">Reference proteome</keyword>
<keyword id="KW-0812">Transmembrane</keyword>
<keyword id="KW-1133">Transmembrane helix</keyword>
<name>USPB_SHIB3</name>
<organism>
    <name type="scientific">Shigella boydii serotype 18 (strain CDC 3083-94 / BS512)</name>
    <dbReference type="NCBI Taxonomy" id="344609"/>
    <lineage>
        <taxon>Bacteria</taxon>
        <taxon>Pseudomonadati</taxon>
        <taxon>Pseudomonadota</taxon>
        <taxon>Gammaproteobacteria</taxon>
        <taxon>Enterobacterales</taxon>
        <taxon>Enterobacteriaceae</taxon>
        <taxon>Shigella</taxon>
    </lineage>
</organism>
<protein>
    <recommendedName>
        <fullName evidence="1">Universal stress protein B</fullName>
    </recommendedName>
</protein>
<dbReference type="EMBL" id="CP001063">
    <property type="protein sequence ID" value="ACD10215.1"/>
    <property type="molecule type" value="Genomic_DNA"/>
</dbReference>
<dbReference type="RefSeq" id="WP_000626187.1">
    <property type="nucleotide sequence ID" value="NC_010658.1"/>
</dbReference>
<dbReference type="SMR" id="B2U3Q2"/>
<dbReference type="STRING" id="344609.SbBS512_E3828"/>
<dbReference type="GeneID" id="93778499"/>
<dbReference type="KEGG" id="sbc:SbBS512_E3828"/>
<dbReference type="HOGENOM" id="CLU_151816_0_0_6"/>
<dbReference type="Proteomes" id="UP000001030">
    <property type="component" value="Chromosome"/>
</dbReference>
<dbReference type="GO" id="GO:0005886">
    <property type="term" value="C:plasma membrane"/>
    <property type="evidence" value="ECO:0007669"/>
    <property type="project" value="UniProtKB-SubCell"/>
</dbReference>
<dbReference type="HAMAP" id="MF_01088">
    <property type="entry name" value="UspB"/>
    <property type="match status" value="1"/>
</dbReference>
<dbReference type="InterPro" id="IPR019598">
    <property type="entry name" value="Universal_stress_protein_B"/>
</dbReference>
<dbReference type="NCBIfam" id="NF003435">
    <property type="entry name" value="PRK04960.1"/>
    <property type="match status" value="1"/>
</dbReference>
<dbReference type="Pfam" id="PF10625">
    <property type="entry name" value="UspB"/>
    <property type="match status" value="1"/>
</dbReference>